<evidence type="ECO:0000255" key="1">
    <source>
        <dbReference type="HAMAP-Rule" id="MF_03216"/>
    </source>
</evidence>
<evidence type="ECO:0000269" key="2">
    <source>
    </source>
</evidence>
<evidence type="ECO:0000269" key="3">
    <source>
    </source>
</evidence>
<evidence type="ECO:0000269" key="4">
    <source>
    </source>
</evidence>
<evidence type="ECO:0000303" key="5">
    <source ref="2"/>
</evidence>
<evidence type="ECO:0000305" key="6">
    <source ref="2"/>
</evidence>
<keyword id="KW-0256">Endoplasmic reticulum</keyword>
<keyword id="KW-0444">Lipid biosynthesis</keyword>
<keyword id="KW-0443">Lipid metabolism</keyword>
<keyword id="KW-0472">Membrane</keyword>
<keyword id="KW-0489">Methyltransferase</keyword>
<keyword id="KW-0496">Mitochondrion</keyword>
<keyword id="KW-0594">Phospholipid biosynthesis</keyword>
<keyword id="KW-1208">Phospholipid metabolism</keyword>
<keyword id="KW-1185">Reference proteome</keyword>
<keyword id="KW-0949">S-adenosyl-L-methionine</keyword>
<keyword id="KW-0808">Transferase</keyword>
<keyword id="KW-0812">Transmembrane</keyword>
<keyword id="KW-1133">Transmembrane helix</keyword>
<dbReference type="EC" id="2.1.1.71" evidence="1 4"/>
<dbReference type="EMBL" id="CM002241">
    <property type="protein sequence ID" value="EAA30926.1"/>
    <property type="molecule type" value="Genomic_DNA"/>
</dbReference>
<dbReference type="RefSeq" id="XP_960162.1">
    <property type="nucleotide sequence ID" value="XM_955069.2"/>
</dbReference>
<dbReference type="FunCoup" id="Q7S5W9">
    <property type="interactions" value="43"/>
</dbReference>
<dbReference type="STRING" id="367110.Q7S5W9"/>
<dbReference type="PaxDb" id="5141-EFNCRP00000004586"/>
<dbReference type="EnsemblFungi" id="EAA30926">
    <property type="protein sequence ID" value="EAA30926"/>
    <property type="gene ID" value="NCU04699"/>
</dbReference>
<dbReference type="GeneID" id="3876309"/>
<dbReference type="KEGG" id="ncr:NCU04699"/>
<dbReference type="VEuPathDB" id="FungiDB:NCU04699"/>
<dbReference type="HOGENOM" id="CLU_086119_0_0_1"/>
<dbReference type="InParanoid" id="Q7S5W9"/>
<dbReference type="OMA" id="PTFWNIA"/>
<dbReference type="OrthoDB" id="8300106at2759"/>
<dbReference type="UniPathway" id="UPA00753"/>
<dbReference type="Proteomes" id="UP000001805">
    <property type="component" value="Chromosome 5, Linkage Group VI"/>
</dbReference>
<dbReference type="GO" id="GO:0005789">
    <property type="term" value="C:endoplasmic reticulum membrane"/>
    <property type="evidence" value="ECO:0007669"/>
    <property type="project" value="UniProtKB-SubCell"/>
</dbReference>
<dbReference type="GO" id="GO:0031966">
    <property type="term" value="C:mitochondrial membrane"/>
    <property type="evidence" value="ECO:0007669"/>
    <property type="project" value="UniProtKB-SubCell"/>
</dbReference>
<dbReference type="GO" id="GO:0000773">
    <property type="term" value="F:phosphatidyl-N-methylethanolamine N-methyltransferase activity"/>
    <property type="evidence" value="ECO:0007669"/>
    <property type="project" value="UniProtKB-UniRule"/>
</dbReference>
<dbReference type="GO" id="GO:0032259">
    <property type="term" value="P:methylation"/>
    <property type="evidence" value="ECO:0007669"/>
    <property type="project" value="UniProtKB-KW"/>
</dbReference>
<dbReference type="GO" id="GO:0006656">
    <property type="term" value="P:phosphatidylcholine biosynthetic process"/>
    <property type="evidence" value="ECO:0000318"/>
    <property type="project" value="GO_Central"/>
</dbReference>
<dbReference type="FunFam" id="1.20.120.1630:FF:000005">
    <property type="entry name" value="Phosphatidylethanolamine N-methyltransferase"/>
    <property type="match status" value="1"/>
</dbReference>
<dbReference type="Gene3D" id="1.20.120.1630">
    <property type="match status" value="1"/>
</dbReference>
<dbReference type="HAMAP" id="MF_03216">
    <property type="entry name" value="PLMT"/>
    <property type="match status" value="1"/>
</dbReference>
<dbReference type="InterPro" id="IPR024960">
    <property type="entry name" value="PEMT/MFAP"/>
</dbReference>
<dbReference type="InterPro" id="IPR007318">
    <property type="entry name" value="Phopholipid_MeTrfase"/>
</dbReference>
<dbReference type="PANTHER" id="PTHR15458">
    <property type="entry name" value="PHOSPHATIDYLETHANOLAMINE N-METHYLTRANSFERASE"/>
    <property type="match status" value="1"/>
</dbReference>
<dbReference type="PANTHER" id="PTHR15458:SF5">
    <property type="entry name" value="PHOSPHATIDYLETHANOLAMINE N-METHYLTRANSFERASE"/>
    <property type="match status" value="1"/>
</dbReference>
<dbReference type="Pfam" id="PF04191">
    <property type="entry name" value="PEMT"/>
    <property type="match status" value="1"/>
</dbReference>
<dbReference type="PIRSF" id="PIRSF005444">
    <property type="entry name" value="PEMT"/>
    <property type="match status" value="1"/>
</dbReference>
<dbReference type="PROSITE" id="PS51599">
    <property type="entry name" value="SAM_PEMT_PEM2"/>
    <property type="match status" value="1"/>
</dbReference>
<comment type="function">
    <text evidence="1 2 3 4">Catalyzes the second two steps of the methylation pathway of phosphatidylcholine biosynthesis, the SAM-dependent methylation of phosphatidylmonomethylethanolamine (PMME) to phosphatidyldimethylethanolamine (PDME) and of PDME to phosphatidylcholine (PC).</text>
</comment>
<comment type="catalytic activity">
    <reaction evidence="1 4">
        <text>a 1,2-diacyl-sn-glycero-3-phospho-N-methylethanolamine + S-adenosyl-L-methionine = a 1,2-diacyl-sn-glycero-3-phospho-N,N-dimethylethanolamine + S-adenosyl-L-homocysteine + H(+)</text>
        <dbReference type="Rhea" id="RHEA:32735"/>
        <dbReference type="ChEBI" id="CHEBI:15378"/>
        <dbReference type="ChEBI" id="CHEBI:57856"/>
        <dbReference type="ChEBI" id="CHEBI:59789"/>
        <dbReference type="ChEBI" id="CHEBI:64572"/>
        <dbReference type="ChEBI" id="CHEBI:64573"/>
        <dbReference type="EC" id="2.1.1.71"/>
    </reaction>
</comment>
<comment type="catalytic activity">
    <reaction evidence="1 4">
        <text>a 1,2-diacyl-sn-glycero-3-phospho-N,N-dimethylethanolamine + S-adenosyl-L-methionine = a 1,2-diacyl-sn-glycero-3-phosphocholine + S-adenosyl-L-homocysteine + H(+)</text>
        <dbReference type="Rhea" id="RHEA:32739"/>
        <dbReference type="ChEBI" id="CHEBI:15378"/>
        <dbReference type="ChEBI" id="CHEBI:57643"/>
        <dbReference type="ChEBI" id="CHEBI:57856"/>
        <dbReference type="ChEBI" id="CHEBI:59789"/>
        <dbReference type="ChEBI" id="CHEBI:64572"/>
        <dbReference type="EC" id="2.1.1.71"/>
    </reaction>
</comment>
<comment type="biophysicochemical properties">
    <kinetics>
        <KM evidence="4">13 uM for S-adenosyl-L-methionine (in presence of phosphatidyl-N-methylethanolamine (PMME) as substrate)</KM>
        <KM evidence="4">18 uM for S-adenosyl-L-methionine (in presence of phosphatidyl-N-dimethylethanolamine (PDME) as substrate)</KM>
    </kinetics>
    <phDependence>
        <text evidence="4">Optimum pH is 8.0.</text>
    </phDependence>
</comment>
<comment type="pathway">
    <text evidence="1 6">Phospholipid metabolism; phosphatidylcholine biosynthesis.</text>
</comment>
<comment type="subcellular location">
    <subcellularLocation>
        <location evidence="1 3">Endoplasmic reticulum membrane</location>
        <topology evidence="1">Multi-pass membrane protein</topology>
    </subcellularLocation>
    <subcellularLocation>
        <location evidence="1">Mitochondrion membrane</location>
        <topology evidence="1">Multi-pass membrane protein</topology>
    </subcellularLocation>
</comment>
<comment type="similarity">
    <text evidence="1">Belongs to the class VI-like SAM-binding methyltransferase superfamily. PEMT/PEM2 methyltransferase family.</text>
</comment>
<protein>
    <recommendedName>
        <fullName evidence="1">Phosphatidyl-N-methylethanolamine N-methyltransferase</fullName>
        <ecNumber evidence="1 4">2.1.1.71</ecNumber>
    </recommendedName>
    <alternativeName>
        <fullName evidence="5">Cholineless-2</fullName>
    </alternativeName>
    <alternativeName>
        <fullName evidence="1">Phospholipid methyltransferase</fullName>
        <shortName evidence="1">PLMT</shortName>
    </alternativeName>
</protein>
<gene>
    <name evidence="5" type="primary">chol-2</name>
    <name type="ORF">NCU04699</name>
</gene>
<reference key="1">
    <citation type="journal article" date="2003" name="Nature">
        <title>The genome sequence of the filamentous fungus Neurospora crassa.</title>
        <authorList>
            <person name="Galagan J.E."/>
            <person name="Calvo S.E."/>
            <person name="Borkovich K.A."/>
            <person name="Selker E.U."/>
            <person name="Read N.D."/>
            <person name="Jaffe D.B."/>
            <person name="FitzHugh W."/>
            <person name="Ma L.-J."/>
            <person name="Smirnov S."/>
            <person name="Purcell S."/>
            <person name="Rehman B."/>
            <person name="Elkins T."/>
            <person name="Engels R."/>
            <person name="Wang S."/>
            <person name="Nielsen C.B."/>
            <person name="Butler J."/>
            <person name="Endrizzi M."/>
            <person name="Qui D."/>
            <person name="Ianakiev P."/>
            <person name="Bell-Pedersen D."/>
            <person name="Nelson M.A."/>
            <person name="Werner-Washburne M."/>
            <person name="Selitrennikoff C.P."/>
            <person name="Kinsey J.A."/>
            <person name="Braun E.L."/>
            <person name="Zelter A."/>
            <person name="Schulte U."/>
            <person name="Kothe G.O."/>
            <person name="Jedd G."/>
            <person name="Mewes H.-W."/>
            <person name="Staben C."/>
            <person name="Marcotte E."/>
            <person name="Greenberg D."/>
            <person name="Roy A."/>
            <person name="Foley K."/>
            <person name="Naylor J."/>
            <person name="Stange-Thomann N."/>
            <person name="Barrett R."/>
            <person name="Gnerre S."/>
            <person name="Kamal M."/>
            <person name="Kamvysselis M."/>
            <person name="Mauceli E.W."/>
            <person name="Bielke C."/>
            <person name="Rudd S."/>
            <person name="Frishman D."/>
            <person name="Krystofova S."/>
            <person name="Rasmussen C."/>
            <person name="Metzenberg R.L."/>
            <person name="Perkins D.D."/>
            <person name="Kroken S."/>
            <person name="Cogoni C."/>
            <person name="Macino G."/>
            <person name="Catcheside D.E.A."/>
            <person name="Li W."/>
            <person name="Pratt R.J."/>
            <person name="Osmani S.A."/>
            <person name="DeSouza C.P.C."/>
            <person name="Glass N.L."/>
            <person name="Orbach M.J."/>
            <person name="Berglund J.A."/>
            <person name="Voelker R."/>
            <person name="Yarden O."/>
            <person name="Plamann M."/>
            <person name="Seiler S."/>
            <person name="Dunlap J.C."/>
            <person name="Radford A."/>
            <person name="Aramayo R."/>
            <person name="Natvig D.O."/>
            <person name="Alex L.A."/>
            <person name="Mannhaupt G."/>
            <person name="Ebbole D.J."/>
            <person name="Freitag M."/>
            <person name="Paulsen I."/>
            <person name="Sachs M.S."/>
            <person name="Lander E.S."/>
            <person name="Nusbaum C."/>
            <person name="Birren B.W."/>
        </authorList>
    </citation>
    <scope>NUCLEOTIDE SEQUENCE [LARGE SCALE GENOMIC DNA]</scope>
    <source>
        <strain>ATCC 24698 / 74-OR23-1A / CBS 708.71 / DSM 1257 / FGSC 987</strain>
    </source>
</reference>
<reference key="2">
    <citation type="journal article" date="1945" name="J. Biol. Chem.">
        <title>The utilization of choline analogues by cholineless mutants of Neurospora.</title>
        <authorList>
            <person name="Horowitz N.H."/>
            <person name="Bonner D."/>
            <person name="Houlahan M.B."/>
        </authorList>
    </citation>
    <scope>PATHWAY</scope>
</reference>
<reference key="3">
    <citation type="journal article" date="1946" name="J. Biol. Chem.">
        <title>The isolation and identification of a natural precursor of choline.</title>
        <authorList>
            <person name="Horowitz N.H."/>
        </authorList>
    </citation>
    <scope>FUNCTION</scope>
</reference>
<reference key="4">
    <citation type="journal article" date="1967" name="Biochim. Biophys. Acta">
        <title>Properties of a phosphatidylmonomethylethanolamine N-methyl-transferase from Neurospora crassa.</title>
        <authorList>
            <person name="Scarborough G.A."/>
            <person name="Nyc J.F."/>
        </authorList>
    </citation>
    <scope>FUNCTION</scope>
    <scope>CATALYTIC ACTIVITY</scope>
    <scope>BIOPHYSICOCHEMICAL PROPERTIES</scope>
</reference>
<reference key="5">
    <citation type="journal article" date="1967" name="J. Biol. Chem.">
        <title>Methylation of ethanolamine phosphatides by microsomes from normal and mutant strains of Neurospora crassa.</title>
        <authorList>
            <person name="Scarborough G.A."/>
            <person name="Nyc J.F."/>
        </authorList>
    </citation>
    <scope>FUNCTION</scope>
    <scope>SUBCELLULAR LOCATION</scope>
</reference>
<proteinExistence type="evidence at protein level"/>
<organism>
    <name type="scientific">Neurospora crassa (strain ATCC 24698 / 74-OR23-1A / CBS 708.71 / DSM 1257 / FGSC 987)</name>
    <dbReference type="NCBI Taxonomy" id="367110"/>
    <lineage>
        <taxon>Eukaryota</taxon>
        <taxon>Fungi</taxon>
        <taxon>Dikarya</taxon>
        <taxon>Ascomycota</taxon>
        <taxon>Pezizomycotina</taxon>
        <taxon>Sordariomycetes</taxon>
        <taxon>Sordariomycetidae</taxon>
        <taxon>Sordariales</taxon>
        <taxon>Sordariaceae</taxon>
        <taxon>Neurospora</taxon>
    </lineage>
</organism>
<feature type="chain" id="PRO_0000437450" description="Phosphatidyl-N-methylethanolamine N-methyltransferase">
    <location>
        <begin position="1"/>
        <end position="214"/>
    </location>
</feature>
<feature type="topological domain" description="Lumenal" evidence="1">
    <location>
        <begin position="1"/>
        <end position="19"/>
    </location>
</feature>
<feature type="intramembrane region" description="Helical" evidence="1">
    <location>
        <begin position="20"/>
        <end position="40"/>
    </location>
</feature>
<feature type="topological domain" description="Lumenal" evidence="1">
    <location>
        <begin position="41"/>
        <end position="52"/>
    </location>
</feature>
<feature type="transmembrane region" description="Helical" evidence="1">
    <location>
        <begin position="53"/>
        <end position="74"/>
    </location>
</feature>
<feature type="topological domain" description="Cytoplasmic" evidence="1">
    <location>
        <begin position="75"/>
        <end position="101"/>
    </location>
</feature>
<feature type="transmembrane region" description="Helical" evidence="1">
    <location>
        <begin position="102"/>
        <end position="122"/>
    </location>
</feature>
<feature type="topological domain" description="Lumenal" evidence="1">
    <location>
        <begin position="123"/>
        <end position="165"/>
    </location>
</feature>
<feature type="transmembrane region" description="Helical" evidence="1">
    <location>
        <begin position="166"/>
        <end position="186"/>
    </location>
</feature>
<feature type="topological domain" description="Cytoplasmic" evidence="1">
    <location>
        <begin position="187"/>
        <end position="214"/>
    </location>
</feature>
<feature type="binding site" evidence="1">
    <location>
        <begin position="106"/>
        <end position="108"/>
    </location>
    <ligand>
        <name>S-adenosyl-L-methionine</name>
        <dbReference type="ChEBI" id="CHEBI:59789"/>
    </ligand>
</feature>
<feature type="binding site" evidence="1">
    <location>
        <begin position="188"/>
        <end position="189"/>
    </location>
    <ligand>
        <name>S-adenosyl-L-methionine</name>
        <dbReference type="ChEBI" id="CHEBI:59789"/>
    </ligand>
</feature>
<name>PLMT_NEUCR</name>
<accession>Q7S5W9</accession>
<sequence>MPLVALGVADLFNFVDYSKTSLAISAAAIAFNPTFWNIVARREYRTKFLTRAFGGNAQVACYFLAVTIFGLGLVRDFLYERALRDQPSHPLLEGTYVKYAAYALLALGNLLVITSTMRLGITGTFLGDYFGILMDGIVTGFPFNVTSAPMYYGSTMSFLGTALLYGKPAGLLLTAWVLFVYIIAIQFENPFTAEIYAKRDRERAKAAGTSKKEL</sequence>